<dbReference type="EC" id="2.3.3.13" evidence="1"/>
<dbReference type="EMBL" id="D85684">
    <property type="protein sequence ID" value="BAA12849.1"/>
    <property type="molecule type" value="Genomic_DNA"/>
</dbReference>
<dbReference type="SMR" id="P94907"/>
<dbReference type="UniPathway" id="UPA00048">
    <property type="reaction ID" value="UER00070"/>
</dbReference>
<dbReference type="GO" id="GO:0005737">
    <property type="term" value="C:cytoplasm"/>
    <property type="evidence" value="ECO:0007669"/>
    <property type="project" value="UniProtKB-SubCell"/>
</dbReference>
<dbReference type="GO" id="GO:0003852">
    <property type="term" value="F:2-isopropylmalate synthase activity"/>
    <property type="evidence" value="ECO:0007669"/>
    <property type="project" value="UniProtKB-UniRule"/>
</dbReference>
<dbReference type="GO" id="GO:0003985">
    <property type="term" value="F:acetyl-CoA C-acetyltransferase activity"/>
    <property type="evidence" value="ECO:0007669"/>
    <property type="project" value="UniProtKB-UniRule"/>
</dbReference>
<dbReference type="GO" id="GO:0030145">
    <property type="term" value="F:manganese ion binding"/>
    <property type="evidence" value="ECO:0007669"/>
    <property type="project" value="UniProtKB-UniRule"/>
</dbReference>
<dbReference type="GO" id="GO:0009098">
    <property type="term" value="P:L-leucine biosynthetic process"/>
    <property type="evidence" value="ECO:0007669"/>
    <property type="project" value="UniProtKB-UniRule"/>
</dbReference>
<dbReference type="CDD" id="cd07940">
    <property type="entry name" value="DRE_TIM_IPMS"/>
    <property type="match status" value="1"/>
</dbReference>
<dbReference type="FunFam" id="1.10.238.260:FF:000001">
    <property type="entry name" value="2-isopropylmalate synthase"/>
    <property type="match status" value="1"/>
</dbReference>
<dbReference type="FunFam" id="3.20.20.70:FF:000010">
    <property type="entry name" value="2-isopropylmalate synthase"/>
    <property type="match status" value="1"/>
</dbReference>
<dbReference type="FunFam" id="3.30.160.270:FF:000001">
    <property type="entry name" value="2-isopropylmalate synthase"/>
    <property type="match status" value="1"/>
</dbReference>
<dbReference type="Gene3D" id="1.10.238.260">
    <property type="match status" value="1"/>
</dbReference>
<dbReference type="Gene3D" id="3.30.160.270">
    <property type="match status" value="1"/>
</dbReference>
<dbReference type="Gene3D" id="3.20.20.70">
    <property type="entry name" value="Aldolase class I"/>
    <property type="match status" value="1"/>
</dbReference>
<dbReference type="HAMAP" id="MF_01025">
    <property type="entry name" value="LeuA_type1"/>
    <property type="match status" value="1"/>
</dbReference>
<dbReference type="InterPro" id="IPR050073">
    <property type="entry name" value="2-IPM_HCS-like"/>
</dbReference>
<dbReference type="InterPro" id="IPR013709">
    <property type="entry name" value="2-isopropylmalate_synth_dimer"/>
</dbReference>
<dbReference type="InterPro" id="IPR002034">
    <property type="entry name" value="AIPM/Hcit_synth_CS"/>
</dbReference>
<dbReference type="InterPro" id="IPR013785">
    <property type="entry name" value="Aldolase_TIM"/>
</dbReference>
<dbReference type="InterPro" id="IPR054691">
    <property type="entry name" value="LeuA/HCS_post-cat"/>
</dbReference>
<dbReference type="InterPro" id="IPR036230">
    <property type="entry name" value="LeuA_allosteric_dom_sf"/>
</dbReference>
<dbReference type="InterPro" id="IPR005671">
    <property type="entry name" value="LeuA_bact_synth"/>
</dbReference>
<dbReference type="InterPro" id="IPR000891">
    <property type="entry name" value="PYR_CT"/>
</dbReference>
<dbReference type="NCBIfam" id="TIGR00973">
    <property type="entry name" value="leuA_bact"/>
    <property type="match status" value="1"/>
</dbReference>
<dbReference type="NCBIfam" id="NF002086">
    <property type="entry name" value="PRK00915.1-3"/>
    <property type="match status" value="1"/>
</dbReference>
<dbReference type="PANTHER" id="PTHR10277:SF9">
    <property type="entry name" value="2-ISOPROPYLMALATE SYNTHASE 1, CHLOROPLASTIC-RELATED"/>
    <property type="match status" value="1"/>
</dbReference>
<dbReference type="PANTHER" id="PTHR10277">
    <property type="entry name" value="HOMOCITRATE SYNTHASE-RELATED"/>
    <property type="match status" value="1"/>
</dbReference>
<dbReference type="Pfam" id="PF22617">
    <property type="entry name" value="HCS_D2"/>
    <property type="match status" value="1"/>
</dbReference>
<dbReference type="Pfam" id="PF00682">
    <property type="entry name" value="HMGL-like"/>
    <property type="match status" value="1"/>
</dbReference>
<dbReference type="Pfam" id="PF08502">
    <property type="entry name" value="LeuA_dimer"/>
    <property type="match status" value="1"/>
</dbReference>
<dbReference type="SMART" id="SM00917">
    <property type="entry name" value="LeuA_dimer"/>
    <property type="match status" value="1"/>
</dbReference>
<dbReference type="SUPFAM" id="SSF110921">
    <property type="entry name" value="2-isopropylmalate synthase LeuA, allosteric (dimerisation) domain"/>
    <property type="match status" value="1"/>
</dbReference>
<dbReference type="SUPFAM" id="SSF51569">
    <property type="entry name" value="Aldolase"/>
    <property type="match status" value="1"/>
</dbReference>
<dbReference type="PROSITE" id="PS00815">
    <property type="entry name" value="AIPM_HOMOCIT_SYNTH_1"/>
    <property type="match status" value="1"/>
</dbReference>
<dbReference type="PROSITE" id="PS00816">
    <property type="entry name" value="AIPM_HOMOCIT_SYNTH_2"/>
    <property type="match status" value="1"/>
</dbReference>
<dbReference type="PROSITE" id="PS50991">
    <property type="entry name" value="PYR_CT"/>
    <property type="match status" value="1"/>
</dbReference>
<protein>
    <recommendedName>
        <fullName evidence="1">2-isopropylmalate synthase</fullName>
        <ecNumber evidence="1">2.3.3.13</ecNumber>
    </recommendedName>
    <alternativeName>
        <fullName evidence="1">Alpha-IPM synthase</fullName>
    </alternativeName>
    <alternativeName>
        <fullName evidence="1">Alpha-isopropylmalate synthase</fullName>
    </alternativeName>
</protein>
<feature type="chain" id="PRO_0000140362" description="2-isopropylmalate synthase">
    <location>
        <begin position="1"/>
        <end position="533"/>
    </location>
</feature>
<feature type="domain" description="Pyruvate carboxyltransferase" evidence="1">
    <location>
        <begin position="8"/>
        <end position="270"/>
    </location>
</feature>
<feature type="region of interest" description="Regulatory domain" evidence="1">
    <location>
        <begin position="409"/>
        <end position="533"/>
    </location>
</feature>
<feature type="binding site" evidence="1">
    <location>
        <position position="17"/>
    </location>
    <ligand>
        <name>Mn(2+)</name>
        <dbReference type="ChEBI" id="CHEBI:29035"/>
    </ligand>
</feature>
<feature type="binding site" evidence="1">
    <location>
        <position position="209"/>
    </location>
    <ligand>
        <name>Mn(2+)</name>
        <dbReference type="ChEBI" id="CHEBI:29035"/>
    </ligand>
</feature>
<feature type="binding site" evidence="1">
    <location>
        <position position="211"/>
    </location>
    <ligand>
        <name>Mn(2+)</name>
        <dbReference type="ChEBI" id="CHEBI:29035"/>
    </ligand>
</feature>
<feature type="binding site" evidence="1">
    <location>
        <position position="245"/>
    </location>
    <ligand>
        <name>Mn(2+)</name>
        <dbReference type="ChEBI" id="CHEBI:29035"/>
    </ligand>
</feature>
<sequence length="533" mass="57989">MNTSPDRVIIFDTTLRDGEQSPGAALNVDEKLTIARALARLGVDVIEAGFPHASPGDFEAVQKIAGSVGSEADSPIICGLARATQKDIKSAADALRPAAKPRIHTFLATSDIHLQYKLKKTRQEVLEIVPEMVAYAKSFLNDVEFSPEDAGRSDPEFLYQVLERAIAAGATTVNIPDTVGYTTPSEFGALIRGIKENVPNIDQAIISVHGHDDLGLAVANFLEAVKNGARQLECTINGIGERAGNASLEELVMALHVRRSYFNPFLGRPAESTEPLTKINTKEIYRTSRLVSNLTGMIVQPNKAIVGANAFAHESGIHQDGVLKHKLTYEIMDAESIGLTNNQIVLGKLSGRNAFRSRLQELGFELSETELNNAFIQFKEMADRKKEITDRDLEAIVNDEIDTVPDHFRLELVQVSCGNNARPTATVTIRTPDGSELSDAAIGTGPVDALCKAIDRVVQIPNELISFSVREVTEGIDALGEVTIRLRYAGRTYSARAADTDIIVASARAYVSALNRLHVALQQKEKTPEMLQV</sequence>
<gene>
    <name evidence="1" type="primary">leuA</name>
</gene>
<reference key="1">
    <citation type="journal article" date="1997" name="Biochim. Biophys. Acta">
        <title>A novel genetic organization: the leuA-rpoD1 locus in the cyanobacterium Microcystis aeruginosa K-81.</title>
        <authorList>
            <person name="Asayama M."/>
            <person name="Kabasawa M."/>
            <person name="Shirai M."/>
        </authorList>
    </citation>
    <scope>NUCLEOTIDE SEQUENCE [GENOMIC DNA]</scope>
    <source>
        <strain>K-81</strain>
    </source>
</reference>
<proteinExistence type="inferred from homology"/>
<comment type="function">
    <text evidence="1">Catalyzes the condensation of the acetyl group of acetyl-CoA with 3-methyl-2-oxobutanoate (2-ketoisovalerate) to form 3-carboxy-3-hydroxy-4-methylpentanoate (2-isopropylmalate).</text>
</comment>
<comment type="catalytic activity">
    <reaction evidence="1">
        <text>3-methyl-2-oxobutanoate + acetyl-CoA + H2O = (2S)-2-isopropylmalate + CoA + H(+)</text>
        <dbReference type="Rhea" id="RHEA:21524"/>
        <dbReference type="ChEBI" id="CHEBI:1178"/>
        <dbReference type="ChEBI" id="CHEBI:11851"/>
        <dbReference type="ChEBI" id="CHEBI:15377"/>
        <dbReference type="ChEBI" id="CHEBI:15378"/>
        <dbReference type="ChEBI" id="CHEBI:57287"/>
        <dbReference type="ChEBI" id="CHEBI:57288"/>
        <dbReference type="EC" id="2.3.3.13"/>
    </reaction>
</comment>
<comment type="cofactor">
    <cofactor evidence="1">
        <name>Mn(2+)</name>
        <dbReference type="ChEBI" id="CHEBI:29035"/>
    </cofactor>
</comment>
<comment type="pathway">
    <text evidence="1">Amino-acid biosynthesis; L-leucine biosynthesis; L-leucine from 3-methyl-2-oxobutanoate: step 1/4.</text>
</comment>
<comment type="subunit">
    <text evidence="1">Homodimer.</text>
</comment>
<comment type="subcellular location">
    <subcellularLocation>
        <location evidence="1">Cytoplasm</location>
    </subcellularLocation>
</comment>
<comment type="similarity">
    <text evidence="1 2">Belongs to the alpha-IPM synthase/homocitrate synthase family. LeuA type 1 subfamily.</text>
</comment>
<accession>P94907</accession>
<evidence type="ECO:0000255" key="1">
    <source>
        <dbReference type="HAMAP-Rule" id="MF_01025"/>
    </source>
</evidence>
<evidence type="ECO:0000305" key="2"/>
<organism>
    <name type="scientific">Microcystis aeruginosa</name>
    <dbReference type="NCBI Taxonomy" id="1126"/>
    <lineage>
        <taxon>Bacteria</taxon>
        <taxon>Bacillati</taxon>
        <taxon>Cyanobacteriota</taxon>
        <taxon>Cyanophyceae</taxon>
        <taxon>Oscillatoriophycideae</taxon>
        <taxon>Chroococcales</taxon>
        <taxon>Microcystaceae</taxon>
        <taxon>Microcystis</taxon>
    </lineage>
</organism>
<keyword id="KW-0028">Amino-acid biosynthesis</keyword>
<keyword id="KW-0100">Branched-chain amino acid biosynthesis</keyword>
<keyword id="KW-0963">Cytoplasm</keyword>
<keyword id="KW-0432">Leucine biosynthesis</keyword>
<keyword id="KW-0464">Manganese</keyword>
<keyword id="KW-0479">Metal-binding</keyword>
<keyword id="KW-0808">Transferase</keyword>
<name>LEU1_MICAE</name>